<sequence length="688" mass="75616">MTTQNFLVEIGTEELPPKALKTLATSFADNVEAELIQAGLSFDKIEWFAAPRRLAVKVLNLATQQPSKEIEKRGPAVSAAFDAEGKPTKAAEGWARGCGITVEQAERIATDKGEWLVHCAKIEGQPTKNLLNDIVANALAKLPIPKPMRWADKTVQFIRPVHTVTMLLGDELIEGEILGVASARTIRGHRFLGEKEFEIQHADQYPQLLREKGSVVADFNERKAEILAKSQAKATALGGVADIEESLLEEVTSLVEYPNVLAAKFEERFLAVPAEALVYTMKGDQKYFPIYDKDGKLLPHFIFVSNINPEDPTAIIEGNEKVVRPRLTDAEFFFKTDLKQKLVDRLPRLETVLFQQQLGTLKDKTDRIEQLAGEIAKQIGADEAKAKRAGLLSKCDLMTNMVFEFTDTQGVMGMHYARHDGEDEEVAVALNEQYMPRFAGDELPKSLVASAVALADKFDTLTGIFGIGQAPKGSADPFALRRAALGALRIIVEKNLPLDLEDLVKKSAALFSDKLTNKNVVADVVDFMLGRFRAWYQDEGIAVDVIQAVLARRPTRPADFDARVRAVSHFRTLDSAEALAAANKRVSNILAKADAAIGEINLTACVEPAEKALAEAVLVLRTEVQPLIAQGDYTAVLDKLANLRAPVDSFFDNVMVNAEDPALRQNRLAILNTLQGLFLQVADISVLQ</sequence>
<evidence type="ECO:0000255" key="1">
    <source>
        <dbReference type="HAMAP-Rule" id="MF_00255"/>
    </source>
</evidence>
<gene>
    <name evidence="1" type="primary">glyS</name>
    <name type="ordered locus">CGSHiEE_07355</name>
</gene>
<comment type="catalytic activity">
    <reaction evidence="1">
        <text>tRNA(Gly) + glycine + ATP = glycyl-tRNA(Gly) + AMP + diphosphate</text>
        <dbReference type="Rhea" id="RHEA:16013"/>
        <dbReference type="Rhea" id="RHEA-COMP:9664"/>
        <dbReference type="Rhea" id="RHEA-COMP:9683"/>
        <dbReference type="ChEBI" id="CHEBI:30616"/>
        <dbReference type="ChEBI" id="CHEBI:33019"/>
        <dbReference type="ChEBI" id="CHEBI:57305"/>
        <dbReference type="ChEBI" id="CHEBI:78442"/>
        <dbReference type="ChEBI" id="CHEBI:78522"/>
        <dbReference type="ChEBI" id="CHEBI:456215"/>
        <dbReference type="EC" id="6.1.1.14"/>
    </reaction>
</comment>
<comment type="subunit">
    <text evidence="1">Tetramer of two alpha and two beta subunits.</text>
</comment>
<comment type="subcellular location">
    <subcellularLocation>
        <location evidence="1">Cytoplasm</location>
    </subcellularLocation>
</comment>
<comment type="similarity">
    <text evidence="1">Belongs to the class-II aminoacyl-tRNA synthetase family.</text>
</comment>
<keyword id="KW-0030">Aminoacyl-tRNA synthetase</keyword>
<keyword id="KW-0067">ATP-binding</keyword>
<keyword id="KW-0963">Cytoplasm</keyword>
<keyword id="KW-0436">Ligase</keyword>
<keyword id="KW-0547">Nucleotide-binding</keyword>
<keyword id="KW-0648">Protein biosynthesis</keyword>
<feature type="chain" id="PRO_1000006364" description="Glycine--tRNA ligase beta subunit">
    <location>
        <begin position="1"/>
        <end position="688"/>
    </location>
</feature>
<protein>
    <recommendedName>
        <fullName evidence="1">Glycine--tRNA ligase beta subunit</fullName>
        <ecNumber evidence="1">6.1.1.14</ecNumber>
    </recommendedName>
    <alternativeName>
        <fullName evidence="1">Glycyl-tRNA synthetase beta subunit</fullName>
        <shortName evidence="1">GlyRS</shortName>
    </alternativeName>
</protein>
<reference key="1">
    <citation type="journal article" date="2007" name="Genome Biol.">
        <title>Characterization and modeling of the Haemophilus influenzae core and supragenomes based on the complete genomic sequences of Rd and 12 clinical nontypeable strains.</title>
        <authorList>
            <person name="Hogg J.S."/>
            <person name="Hu F.Z."/>
            <person name="Janto B."/>
            <person name="Boissy R."/>
            <person name="Hayes J."/>
            <person name="Keefe R."/>
            <person name="Post J.C."/>
            <person name="Ehrlich G.D."/>
        </authorList>
    </citation>
    <scope>NUCLEOTIDE SEQUENCE [LARGE SCALE GENOMIC DNA]</scope>
    <source>
        <strain>PittEE</strain>
    </source>
</reference>
<dbReference type="EC" id="6.1.1.14" evidence="1"/>
<dbReference type="EMBL" id="CP000671">
    <property type="protein sequence ID" value="ABQ98794.1"/>
    <property type="molecule type" value="Genomic_DNA"/>
</dbReference>
<dbReference type="SMR" id="A5UDE3"/>
<dbReference type="KEGG" id="hip:CGSHiEE_07355"/>
<dbReference type="HOGENOM" id="CLU_007220_2_2_6"/>
<dbReference type="GO" id="GO:0005829">
    <property type="term" value="C:cytosol"/>
    <property type="evidence" value="ECO:0007669"/>
    <property type="project" value="TreeGrafter"/>
</dbReference>
<dbReference type="GO" id="GO:0004814">
    <property type="term" value="F:arginine-tRNA ligase activity"/>
    <property type="evidence" value="ECO:0007669"/>
    <property type="project" value="InterPro"/>
</dbReference>
<dbReference type="GO" id="GO:0005524">
    <property type="term" value="F:ATP binding"/>
    <property type="evidence" value="ECO:0007669"/>
    <property type="project" value="UniProtKB-UniRule"/>
</dbReference>
<dbReference type="GO" id="GO:0004820">
    <property type="term" value="F:glycine-tRNA ligase activity"/>
    <property type="evidence" value="ECO:0007669"/>
    <property type="project" value="UniProtKB-UniRule"/>
</dbReference>
<dbReference type="GO" id="GO:0006420">
    <property type="term" value="P:arginyl-tRNA aminoacylation"/>
    <property type="evidence" value="ECO:0007669"/>
    <property type="project" value="InterPro"/>
</dbReference>
<dbReference type="GO" id="GO:0006426">
    <property type="term" value="P:glycyl-tRNA aminoacylation"/>
    <property type="evidence" value="ECO:0007669"/>
    <property type="project" value="UniProtKB-UniRule"/>
</dbReference>
<dbReference type="HAMAP" id="MF_00255">
    <property type="entry name" value="Gly_tRNA_synth_beta"/>
    <property type="match status" value="1"/>
</dbReference>
<dbReference type="InterPro" id="IPR008909">
    <property type="entry name" value="DALR_anticod-bd"/>
</dbReference>
<dbReference type="InterPro" id="IPR015944">
    <property type="entry name" value="Gly-tRNA-synth_bsu"/>
</dbReference>
<dbReference type="InterPro" id="IPR006194">
    <property type="entry name" value="Gly-tRNA-synth_heterodimer"/>
</dbReference>
<dbReference type="NCBIfam" id="TIGR00211">
    <property type="entry name" value="glyS"/>
    <property type="match status" value="1"/>
</dbReference>
<dbReference type="PANTHER" id="PTHR30075:SF2">
    <property type="entry name" value="GLYCINE--TRNA LIGASE, CHLOROPLASTIC_MITOCHONDRIAL 2"/>
    <property type="match status" value="1"/>
</dbReference>
<dbReference type="PANTHER" id="PTHR30075">
    <property type="entry name" value="GLYCYL-TRNA SYNTHETASE"/>
    <property type="match status" value="1"/>
</dbReference>
<dbReference type="Pfam" id="PF05746">
    <property type="entry name" value="DALR_1"/>
    <property type="match status" value="1"/>
</dbReference>
<dbReference type="Pfam" id="PF02092">
    <property type="entry name" value="tRNA_synt_2f"/>
    <property type="match status" value="1"/>
</dbReference>
<dbReference type="PRINTS" id="PR01045">
    <property type="entry name" value="TRNASYNTHGB"/>
</dbReference>
<dbReference type="SMART" id="SM00836">
    <property type="entry name" value="DALR_1"/>
    <property type="match status" value="1"/>
</dbReference>
<dbReference type="SUPFAM" id="SSF109604">
    <property type="entry name" value="HD-domain/PDEase-like"/>
    <property type="match status" value="1"/>
</dbReference>
<dbReference type="PROSITE" id="PS50861">
    <property type="entry name" value="AA_TRNA_LIGASE_II_GLYAB"/>
    <property type="match status" value="1"/>
</dbReference>
<organism>
    <name type="scientific">Haemophilus influenzae (strain PittEE)</name>
    <dbReference type="NCBI Taxonomy" id="374930"/>
    <lineage>
        <taxon>Bacteria</taxon>
        <taxon>Pseudomonadati</taxon>
        <taxon>Pseudomonadota</taxon>
        <taxon>Gammaproteobacteria</taxon>
        <taxon>Pasteurellales</taxon>
        <taxon>Pasteurellaceae</taxon>
        <taxon>Haemophilus</taxon>
    </lineage>
</organism>
<name>SYGB_HAEIE</name>
<accession>A5UDE3</accession>
<proteinExistence type="inferred from homology"/>